<comment type="function">
    <text evidence="1">Negative regulator of class I heat shock genes (grpE-dnaK-dnaJ and groELS operons). Prevents heat-shock induction of these operons.</text>
</comment>
<comment type="similarity">
    <text evidence="1">Belongs to the HrcA family.</text>
</comment>
<organism>
    <name type="scientific">Caldanaerobacter subterraneus subsp. tengcongensis (strain DSM 15242 / JCM 11007 / NBRC 100824 / MB4)</name>
    <name type="common">Thermoanaerobacter tengcongensis</name>
    <dbReference type="NCBI Taxonomy" id="273068"/>
    <lineage>
        <taxon>Bacteria</taxon>
        <taxon>Bacillati</taxon>
        <taxon>Bacillota</taxon>
        <taxon>Clostridia</taxon>
        <taxon>Thermoanaerobacterales</taxon>
        <taxon>Thermoanaerobacteraceae</taxon>
        <taxon>Caldanaerobacter</taxon>
    </lineage>
</organism>
<protein>
    <recommendedName>
        <fullName evidence="1">Heat-inducible transcription repressor HrcA</fullName>
    </recommendedName>
</protein>
<gene>
    <name evidence="1" type="primary">hrcA</name>
    <name type="ordered locus">TTE0953</name>
</gene>
<proteinExistence type="inferred from homology"/>
<name>HRCA_CALS4</name>
<keyword id="KW-1185">Reference proteome</keyword>
<keyword id="KW-0678">Repressor</keyword>
<keyword id="KW-0346">Stress response</keyword>
<keyword id="KW-0804">Transcription</keyword>
<keyword id="KW-0805">Transcription regulation</keyword>
<dbReference type="EMBL" id="AE008691">
    <property type="protein sequence ID" value="AAM24209.1"/>
    <property type="molecule type" value="Genomic_DNA"/>
</dbReference>
<dbReference type="RefSeq" id="WP_011025328.1">
    <property type="nucleotide sequence ID" value="NC_003869.1"/>
</dbReference>
<dbReference type="SMR" id="Q8RB70"/>
<dbReference type="STRING" id="273068.TTE0953"/>
<dbReference type="KEGG" id="tte:TTE0953"/>
<dbReference type="eggNOG" id="COG1420">
    <property type="taxonomic scope" value="Bacteria"/>
</dbReference>
<dbReference type="HOGENOM" id="CLU_050019_1_0_9"/>
<dbReference type="OrthoDB" id="9783139at2"/>
<dbReference type="Proteomes" id="UP000000555">
    <property type="component" value="Chromosome"/>
</dbReference>
<dbReference type="GO" id="GO:0003677">
    <property type="term" value="F:DNA binding"/>
    <property type="evidence" value="ECO:0007669"/>
    <property type="project" value="InterPro"/>
</dbReference>
<dbReference type="GO" id="GO:0045892">
    <property type="term" value="P:negative regulation of DNA-templated transcription"/>
    <property type="evidence" value="ECO:0007669"/>
    <property type="project" value="UniProtKB-UniRule"/>
</dbReference>
<dbReference type="FunFam" id="1.10.10.10:FF:000049">
    <property type="entry name" value="Heat-inducible transcription repressor HrcA"/>
    <property type="match status" value="1"/>
</dbReference>
<dbReference type="Gene3D" id="3.30.450.40">
    <property type="match status" value="1"/>
</dbReference>
<dbReference type="Gene3D" id="3.30.390.60">
    <property type="entry name" value="Heat-inducible transcription repressor hrca homolog, domain 3"/>
    <property type="match status" value="1"/>
</dbReference>
<dbReference type="Gene3D" id="1.10.10.10">
    <property type="entry name" value="Winged helix-like DNA-binding domain superfamily/Winged helix DNA-binding domain"/>
    <property type="match status" value="1"/>
</dbReference>
<dbReference type="HAMAP" id="MF_00081">
    <property type="entry name" value="HrcA"/>
    <property type="match status" value="1"/>
</dbReference>
<dbReference type="InterPro" id="IPR029016">
    <property type="entry name" value="GAF-like_dom_sf"/>
</dbReference>
<dbReference type="InterPro" id="IPR002571">
    <property type="entry name" value="HrcA"/>
</dbReference>
<dbReference type="InterPro" id="IPR021153">
    <property type="entry name" value="HrcA_C"/>
</dbReference>
<dbReference type="InterPro" id="IPR036388">
    <property type="entry name" value="WH-like_DNA-bd_sf"/>
</dbReference>
<dbReference type="InterPro" id="IPR036390">
    <property type="entry name" value="WH_DNA-bd_sf"/>
</dbReference>
<dbReference type="InterPro" id="IPR023120">
    <property type="entry name" value="WHTH_transcript_rep_HrcA_IDD"/>
</dbReference>
<dbReference type="NCBIfam" id="TIGR00331">
    <property type="entry name" value="hrcA"/>
    <property type="match status" value="1"/>
</dbReference>
<dbReference type="PANTHER" id="PTHR34824">
    <property type="entry name" value="HEAT-INDUCIBLE TRANSCRIPTION REPRESSOR HRCA"/>
    <property type="match status" value="1"/>
</dbReference>
<dbReference type="PANTHER" id="PTHR34824:SF1">
    <property type="entry name" value="HEAT-INDUCIBLE TRANSCRIPTION REPRESSOR HRCA"/>
    <property type="match status" value="1"/>
</dbReference>
<dbReference type="Pfam" id="PF01628">
    <property type="entry name" value="HrcA"/>
    <property type="match status" value="1"/>
</dbReference>
<dbReference type="PIRSF" id="PIRSF005485">
    <property type="entry name" value="HrcA"/>
    <property type="match status" value="1"/>
</dbReference>
<dbReference type="SUPFAM" id="SSF55781">
    <property type="entry name" value="GAF domain-like"/>
    <property type="match status" value="1"/>
</dbReference>
<dbReference type="SUPFAM" id="SSF46785">
    <property type="entry name" value="Winged helix' DNA-binding domain"/>
    <property type="match status" value="1"/>
</dbReference>
<sequence>MPLDDRKKRILFAVVTDYIMTAEPIGSRTIAKKYNMGISSATIRNEMADLEEMGYLEQPHTSAGRIPSDKGYRFYVDTILQNFMKEDLSPPPRVREEVIAEFDEIVKKYAKILADITHHTTVAKMPKLNPDKIKRLQLIPVASNKMIMVVITDTGIVKNYLLNLCQSVDRNVFEFLNNLLNDKIAGKSEKAIFNFLEKELKDTLGDMAFMADELIKTILLSLKQLQETDVYTDGTLHILDFPEYKDLNKAKNFLSLLDNKSLLNEVLEPVDDFVDVKIGRENRFEEMRELSVIKTTYKINDRVVGTIGIIGPTRMDYRRLISELTLMTRELSNLLSSIYNDEV</sequence>
<reference key="1">
    <citation type="journal article" date="2002" name="Genome Res.">
        <title>A complete sequence of the T. tengcongensis genome.</title>
        <authorList>
            <person name="Bao Q."/>
            <person name="Tian Y."/>
            <person name="Li W."/>
            <person name="Xu Z."/>
            <person name="Xuan Z."/>
            <person name="Hu S."/>
            <person name="Dong W."/>
            <person name="Yang J."/>
            <person name="Chen Y."/>
            <person name="Xue Y."/>
            <person name="Xu Y."/>
            <person name="Lai X."/>
            <person name="Huang L."/>
            <person name="Dong X."/>
            <person name="Ma Y."/>
            <person name="Ling L."/>
            <person name="Tan H."/>
            <person name="Chen R."/>
            <person name="Wang J."/>
            <person name="Yu J."/>
            <person name="Yang H."/>
        </authorList>
    </citation>
    <scope>NUCLEOTIDE SEQUENCE [LARGE SCALE GENOMIC DNA]</scope>
    <source>
        <strain>DSM 15242 / JCM 11007 / NBRC 100824 / MB4</strain>
    </source>
</reference>
<accession>Q8RB70</accession>
<evidence type="ECO:0000255" key="1">
    <source>
        <dbReference type="HAMAP-Rule" id="MF_00081"/>
    </source>
</evidence>
<feature type="chain" id="PRO_0000182553" description="Heat-inducible transcription repressor HrcA">
    <location>
        <begin position="1"/>
        <end position="343"/>
    </location>
</feature>